<organism>
    <name type="scientific">Bacteroides fragilis (strain YCH46)</name>
    <dbReference type="NCBI Taxonomy" id="295405"/>
    <lineage>
        <taxon>Bacteria</taxon>
        <taxon>Pseudomonadati</taxon>
        <taxon>Bacteroidota</taxon>
        <taxon>Bacteroidia</taxon>
        <taxon>Bacteroidales</taxon>
        <taxon>Bacteroidaceae</taxon>
        <taxon>Bacteroides</taxon>
    </lineage>
</organism>
<name>CYSC_BACFR</name>
<comment type="function">
    <text evidence="1">Catalyzes the synthesis of activated sulfate.</text>
</comment>
<comment type="catalytic activity">
    <reaction evidence="1">
        <text>adenosine 5'-phosphosulfate + ATP = 3'-phosphoadenylyl sulfate + ADP + H(+)</text>
        <dbReference type="Rhea" id="RHEA:24152"/>
        <dbReference type="ChEBI" id="CHEBI:15378"/>
        <dbReference type="ChEBI" id="CHEBI:30616"/>
        <dbReference type="ChEBI" id="CHEBI:58243"/>
        <dbReference type="ChEBI" id="CHEBI:58339"/>
        <dbReference type="ChEBI" id="CHEBI:456216"/>
        <dbReference type="EC" id="2.7.1.25"/>
    </reaction>
</comment>
<comment type="pathway">
    <text evidence="1">Sulfur metabolism; hydrogen sulfide biosynthesis; sulfite from sulfate: step 2/3.</text>
</comment>
<comment type="similarity">
    <text evidence="1">Belongs to the APS kinase family.</text>
</comment>
<accession>Q64VR1</accession>
<proteinExistence type="inferred from homology"/>
<keyword id="KW-0067">ATP-binding</keyword>
<keyword id="KW-0418">Kinase</keyword>
<keyword id="KW-0547">Nucleotide-binding</keyword>
<keyword id="KW-0597">Phosphoprotein</keyword>
<keyword id="KW-0808">Transferase</keyword>
<reference key="1">
    <citation type="journal article" date="2004" name="Proc. Natl. Acad. Sci. U.S.A.">
        <title>Genomic analysis of Bacteroides fragilis reveals extensive DNA inversions regulating cell surface adaptation.</title>
        <authorList>
            <person name="Kuwahara T."/>
            <person name="Yamashita A."/>
            <person name="Hirakawa H."/>
            <person name="Nakayama H."/>
            <person name="Toh H."/>
            <person name="Okada N."/>
            <person name="Kuhara S."/>
            <person name="Hattori M."/>
            <person name="Hayashi T."/>
            <person name="Ohnishi Y."/>
        </authorList>
    </citation>
    <scope>NUCLEOTIDE SEQUENCE [LARGE SCALE GENOMIC DNA]</scope>
    <source>
        <strain>YCH46</strain>
    </source>
</reference>
<evidence type="ECO:0000255" key="1">
    <source>
        <dbReference type="HAMAP-Rule" id="MF_00065"/>
    </source>
</evidence>
<feature type="chain" id="PRO_1000202406" description="Adenylyl-sulfate kinase">
    <location>
        <begin position="1"/>
        <end position="202"/>
    </location>
</feature>
<feature type="active site" description="Phosphoserine intermediate" evidence="1">
    <location>
        <position position="109"/>
    </location>
</feature>
<feature type="binding site" evidence="1">
    <location>
        <begin position="35"/>
        <end position="42"/>
    </location>
    <ligand>
        <name>ATP</name>
        <dbReference type="ChEBI" id="CHEBI:30616"/>
    </ligand>
</feature>
<protein>
    <recommendedName>
        <fullName evidence="1">Adenylyl-sulfate kinase</fullName>
        <ecNumber evidence="1">2.7.1.25</ecNumber>
    </recommendedName>
    <alternativeName>
        <fullName evidence="1">APS kinase</fullName>
    </alternativeName>
    <alternativeName>
        <fullName evidence="1">ATP adenosine-5'-phosphosulfate 3'-phosphotransferase</fullName>
    </alternativeName>
    <alternativeName>
        <fullName evidence="1">Adenosine-5'-phosphosulfate kinase</fullName>
    </alternativeName>
</protein>
<dbReference type="EC" id="2.7.1.25" evidence="1"/>
<dbReference type="EMBL" id="AP006841">
    <property type="protein sequence ID" value="BAD48415.1"/>
    <property type="molecule type" value="Genomic_DNA"/>
</dbReference>
<dbReference type="RefSeq" id="WP_011202511.1">
    <property type="nucleotide sequence ID" value="NC_006347.1"/>
</dbReference>
<dbReference type="RefSeq" id="YP_098949.1">
    <property type="nucleotide sequence ID" value="NC_006347.1"/>
</dbReference>
<dbReference type="SMR" id="Q64VR1"/>
<dbReference type="STRING" id="295405.BF1667"/>
<dbReference type="KEGG" id="bfr:BF1667"/>
<dbReference type="PATRIC" id="fig|295405.11.peg.1618"/>
<dbReference type="HOGENOM" id="CLU_046932_1_0_10"/>
<dbReference type="OrthoDB" id="9804504at2"/>
<dbReference type="UniPathway" id="UPA00140">
    <property type="reaction ID" value="UER00205"/>
</dbReference>
<dbReference type="Proteomes" id="UP000002197">
    <property type="component" value="Chromosome"/>
</dbReference>
<dbReference type="GO" id="GO:0004020">
    <property type="term" value="F:adenylylsulfate kinase activity"/>
    <property type="evidence" value="ECO:0007669"/>
    <property type="project" value="UniProtKB-UniRule"/>
</dbReference>
<dbReference type="GO" id="GO:0005524">
    <property type="term" value="F:ATP binding"/>
    <property type="evidence" value="ECO:0007669"/>
    <property type="project" value="UniProtKB-UniRule"/>
</dbReference>
<dbReference type="GO" id="GO:0070814">
    <property type="term" value="P:hydrogen sulfide biosynthetic process"/>
    <property type="evidence" value="ECO:0007669"/>
    <property type="project" value="UniProtKB-UniRule"/>
</dbReference>
<dbReference type="GO" id="GO:0000103">
    <property type="term" value="P:sulfate assimilation"/>
    <property type="evidence" value="ECO:0007669"/>
    <property type="project" value="UniProtKB-UniRule"/>
</dbReference>
<dbReference type="CDD" id="cd02027">
    <property type="entry name" value="APSK"/>
    <property type="match status" value="1"/>
</dbReference>
<dbReference type="FunFam" id="3.40.50.300:FF:001219">
    <property type="entry name" value="Adenylyl-sulfate kinase"/>
    <property type="match status" value="1"/>
</dbReference>
<dbReference type="Gene3D" id="3.40.50.300">
    <property type="entry name" value="P-loop containing nucleotide triphosphate hydrolases"/>
    <property type="match status" value="1"/>
</dbReference>
<dbReference type="HAMAP" id="MF_00065">
    <property type="entry name" value="Adenylyl_sulf_kinase"/>
    <property type="match status" value="1"/>
</dbReference>
<dbReference type="InterPro" id="IPR002891">
    <property type="entry name" value="APS_kinase"/>
</dbReference>
<dbReference type="InterPro" id="IPR027417">
    <property type="entry name" value="P-loop_NTPase"/>
</dbReference>
<dbReference type="NCBIfam" id="TIGR00455">
    <property type="entry name" value="apsK"/>
    <property type="match status" value="1"/>
</dbReference>
<dbReference type="NCBIfam" id="NF003013">
    <property type="entry name" value="PRK03846.1"/>
    <property type="match status" value="1"/>
</dbReference>
<dbReference type="PANTHER" id="PTHR11055">
    <property type="entry name" value="BIFUNCTIONAL 3'-PHOSPHOADENOSINE 5'-PHOSPHOSULFATE SYNTHASE"/>
    <property type="match status" value="1"/>
</dbReference>
<dbReference type="PANTHER" id="PTHR11055:SF1">
    <property type="entry name" value="PAPS SYNTHETASE, ISOFORM D"/>
    <property type="match status" value="1"/>
</dbReference>
<dbReference type="Pfam" id="PF01583">
    <property type="entry name" value="APS_kinase"/>
    <property type="match status" value="1"/>
</dbReference>
<dbReference type="SUPFAM" id="SSF52540">
    <property type="entry name" value="P-loop containing nucleoside triphosphate hydrolases"/>
    <property type="match status" value="1"/>
</dbReference>
<gene>
    <name evidence="1" type="primary">cysC</name>
    <name type="ordered locus">BF1667</name>
</gene>
<sequence>MEENNNIYPIFDRMLTRQDKEELLKQRGVMIWFTGLSGSGKSTIAIALERELHKRGLLCRILDGDNIRTGINNNLSFSETDRVENIRRIAEVSKLFIDTGIITIAAFISPNNDIREMAARIVGPDDFLEIFVSTPLAECEKRDVKGLYAKARRGEIKNFTGISAPFEAPEHPALSLDTSVLSLEESVNRLLEIVLPRVSRHE</sequence>